<accession>Q9Z0Y2</accession>
<accession>A6H6K5</accession>
<accession>Q9D7E2</accession>
<accession>Q9D884</accession>
<protein>
    <recommendedName>
        <fullName>Phospholipase A2</fullName>
        <ecNumber evidence="4 5">3.1.1.4</ecNumber>
    </recommendedName>
    <alternativeName>
        <fullName>Group IB phospholipase A2</fullName>
    </alternativeName>
    <alternativeName>
        <fullName>PLA2-Ib</fullName>
    </alternativeName>
    <alternativeName>
        <fullName>Phosphatidylcholine 2-acylhydrolase 1B</fullName>
    </alternativeName>
</protein>
<organism>
    <name type="scientific">Mus musculus</name>
    <name type="common">Mouse</name>
    <dbReference type="NCBI Taxonomy" id="10090"/>
    <lineage>
        <taxon>Eukaryota</taxon>
        <taxon>Metazoa</taxon>
        <taxon>Chordata</taxon>
        <taxon>Craniata</taxon>
        <taxon>Vertebrata</taxon>
        <taxon>Euteleostomi</taxon>
        <taxon>Mammalia</taxon>
        <taxon>Eutheria</taxon>
        <taxon>Euarchontoglires</taxon>
        <taxon>Glires</taxon>
        <taxon>Rodentia</taxon>
        <taxon>Myomorpha</taxon>
        <taxon>Muroidea</taxon>
        <taxon>Muridae</taxon>
        <taxon>Murinae</taxon>
        <taxon>Mus</taxon>
        <taxon>Mus</taxon>
    </lineage>
</organism>
<name>PA21B_MOUSE</name>
<dbReference type="EC" id="3.1.1.4" evidence="4 5"/>
<dbReference type="EMBL" id="AF094611">
    <property type="protein sequence ID" value="AAF02298.1"/>
    <property type="molecule type" value="Genomic_DNA"/>
</dbReference>
<dbReference type="EMBL" id="AF097637">
    <property type="protein sequence ID" value="AAD19896.1"/>
    <property type="molecule type" value="mRNA"/>
</dbReference>
<dbReference type="EMBL" id="AF162712">
    <property type="protein sequence ID" value="AAD45806.1"/>
    <property type="molecule type" value="mRNA"/>
</dbReference>
<dbReference type="EMBL" id="AF187852">
    <property type="protein sequence ID" value="AAF44297.1"/>
    <property type="molecule type" value="mRNA"/>
</dbReference>
<dbReference type="EMBL" id="AF094610">
    <property type="protein sequence ID" value="AAG27064.1"/>
    <property type="molecule type" value="mRNA"/>
</dbReference>
<dbReference type="EMBL" id="AK028104">
    <property type="protein sequence ID" value="BAC25749.1"/>
    <property type="molecule type" value="mRNA"/>
</dbReference>
<dbReference type="EMBL" id="AK028134">
    <property type="protein sequence ID" value="BAC25763.1"/>
    <property type="molecule type" value="mRNA"/>
</dbReference>
<dbReference type="EMBL" id="AK008936">
    <property type="protein sequence ID" value="BAB25978.1"/>
    <property type="molecule type" value="mRNA"/>
</dbReference>
<dbReference type="EMBL" id="AK007730">
    <property type="protein sequence ID" value="BAB25218.1"/>
    <property type="molecule type" value="mRNA"/>
</dbReference>
<dbReference type="EMBL" id="AK007797">
    <property type="protein sequence ID" value="BAB25263.1"/>
    <property type="molecule type" value="mRNA"/>
</dbReference>
<dbReference type="EMBL" id="AK008664">
    <property type="protein sequence ID" value="BAB25819.1"/>
    <property type="molecule type" value="mRNA"/>
</dbReference>
<dbReference type="EMBL" id="AK008668">
    <property type="protein sequence ID" value="BAB25822.1"/>
    <property type="molecule type" value="mRNA"/>
</dbReference>
<dbReference type="EMBL" id="AK008841">
    <property type="protein sequence ID" value="BAB25922.1"/>
    <property type="molecule type" value="mRNA"/>
</dbReference>
<dbReference type="EMBL" id="AK008934">
    <property type="protein sequence ID" value="BAB25976.1"/>
    <property type="molecule type" value="mRNA"/>
</dbReference>
<dbReference type="EMBL" id="AK008331">
    <property type="protein sequence ID" value="BAB25608.1"/>
    <property type="molecule type" value="mRNA"/>
</dbReference>
<dbReference type="EMBL" id="AK009314">
    <property type="protein sequence ID" value="BAB26212.1"/>
    <property type="molecule type" value="mRNA"/>
</dbReference>
<dbReference type="EMBL" id="BC145908">
    <property type="protein sequence ID" value="AAI45909.1"/>
    <property type="molecule type" value="mRNA"/>
</dbReference>
<dbReference type="EMBL" id="BC145910">
    <property type="protein sequence ID" value="AAI45911.1"/>
    <property type="molecule type" value="mRNA"/>
</dbReference>
<dbReference type="CCDS" id="CCDS19592.1"/>
<dbReference type="RefSeq" id="NP_035237.1">
    <property type="nucleotide sequence ID" value="NM_011107.2"/>
</dbReference>
<dbReference type="SMR" id="Q9Z0Y2"/>
<dbReference type="FunCoup" id="Q9Z0Y2">
    <property type="interactions" value="458"/>
</dbReference>
<dbReference type="STRING" id="10090.ENSMUSP00000031495"/>
<dbReference type="BindingDB" id="Q9Z0Y2"/>
<dbReference type="ChEMBL" id="CHEMBL4378"/>
<dbReference type="PaxDb" id="10090-ENSMUSP00000031495"/>
<dbReference type="ProteomicsDB" id="293995"/>
<dbReference type="Antibodypedia" id="31466">
    <property type="antibodies" value="334 antibodies from 38 providers"/>
</dbReference>
<dbReference type="DNASU" id="18778"/>
<dbReference type="Ensembl" id="ENSMUST00000031495.11">
    <property type="protein sequence ID" value="ENSMUSP00000031495.5"/>
    <property type="gene ID" value="ENSMUSG00000029522.13"/>
</dbReference>
<dbReference type="GeneID" id="18778"/>
<dbReference type="KEGG" id="mmu:18778"/>
<dbReference type="UCSC" id="uc008zdx.1">
    <property type="organism name" value="mouse"/>
</dbReference>
<dbReference type="AGR" id="MGI:101842"/>
<dbReference type="CTD" id="5319"/>
<dbReference type="MGI" id="MGI:101842">
    <property type="gene designation" value="Pla2g1b"/>
</dbReference>
<dbReference type="VEuPathDB" id="HostDB:ENSMUSG00000029522"/>
<dbReference type="eggNOG" id="KOG4087">
    <property type="taxonomic scope" value="Eukaryota"/>
</dbReference>
<dbReference type="GeneTree" id="ENSGT00940000154885"/>
<dbReference type="HOGENOM" id="CLU_090683_1_1_1"/>
<dbReference type="InParanoid" id="Q9Z0Y2"/>
<dbReference type="OMA" id="RSEWNPE"/>
<dbReference type="OrthoDB" id="5841574at2759"/>
<dbReference type="PhylomeDB" id="Q9Z0Y2"/>
<dbReference type="TreeFam" id="TF319283"/>
<dbReference type="Reactome" id="R-MMU-1482788">
    <property type="pathway name" value="Acyl chain remodelling of PC"/>
</dbReference>
<dbReference type="Reactome" id="R-MMU-1482801">
    <property type="pathway name" value="Acyl chain remodelling of PS"/>
</dbReference>
<dbReference type="Reactome" id="R-MMU-1482839">
    <property type="pathway name" value="Acyl chain remodelling of PE"/>
</dbReference>
<dbReference type="Reactome" id="R-MMU-1482922">
    <property type="pathway name" value="Acyl chain remodelling of PI"/>
</dbReference>
<dbReference type="Reactome" id="R-MMU-1482925">
    <property type="pathway name" value="Acyl chain remodelling of PG"/>
</dbReference>
<dbReference type="Reactome" id="R-MMU-1483166">
    <property type="pathway name" value="Synthesis of PA"/>
</dbReference>
<dbReference type="BioGRID-ORCS" id="18778">
    <property type="hits" value="8 hits in 81 CRISPR screens"/>
</dbReference>
<dbReference type="ChiTaRS" id="Pla2g1b">
    <property type="organism name" value="mouse"/>
</dbReference>
<dbReference type="PRO" id="PR:Q9Z0Y2"/>
<dbReference type="Proteomes" id="UP000000589">
    <property type="component" value="Chromosome 5"/>
</dbReference>
<dbReference type="RNAct" id="Q9Z0Y2">
    <property type="molecule type" value="protein"/>
</dbReference>
<dbReference type="Bgee" id="ENSMUSG00000029522">
    <property type="expression patterns" value="Expressed in epithelium of stomach and 47 other cell types or tissues"/>
</dbReference>
<dbReference type="ExpressionAtlas" id="Q9Z0Y2">
    <property type="expression patterns" value="baseline and differential"/>
</dbReference>
<dbReference type="GO" id="GO:0009986">
    <property type="term" value="C:cell surface"/>
    <property type="evidence" value="ECO:0007669"/>
    <property type="project" value="Ensembl"/>
</dbReference>
<dbReference type="GO" id="GO:0005576">
    <property type="term" value="C:extracellular region"/>
    <property type="evidence" value="ECO:0000314"/>
    <property type="project" value="MGI"/>
</dbReference>
<dbReference type="GO" id="GO:0005615">
    <property type="term" value="C:extracellular space"/>
    <property type="evidence" value="ECO:0007669"/>
    <property type="project" value="Ensembl"/>
</dbReference>
<dbReference type="GO" id="GO:0032052">
    <property type="term" value="F:bile acid binding"/>
    <property type="evidence" value="ECO:0000250"/>
    <property type="project" value="UniProtKB"/>
</dbReference>
<dbReference type="GO" id="GO:0005509">
    <property type="term" value="F:calcium ion binding"/>
    <property type="evidence" value="ECO:0007669"/>
    <property type="project" value="Ensembl"/>
</dbReference>
<dbReference type="GO" id="GO:0047498">
    <property type="term" value="F:calcium-dependent phospholipase A2 activity"/>
    <property type="evidence" value="ECO:0000250"/>
    <property type="project" value="UniProtKB"/>
</dbReference>
<dbReference type="GO" id="GO:0004623">
    <property type="term" value="F:phospholipase A2 activity"/>
    <property type="evidence" value="ECO:0000314"/>
    <property type="project" value="MGI"/>
</dbReference>
<dbReference type="GO" id="GO:0005102">
    <property type="term" value="F:signaling receptor binding"/>
    <property type="evidence" value="ECO:0000314"/>
    <property type="project" value="MGI"/>
</dbReference>
<dbReference type="GO" id="GO:0019731">
    <property type="term" value="P:antibacterial humoral response"/>
    <property type="evidence" value="ECO:0007669"/>
    <property type="project" value="Ensembl"/>
</dbReference>
<dbReference type="GO" id="GO:0061844">
    <property type="term" value="P:antimicrobial humoral immune response mediated by antimicrobial peptide"/>
    <property type="evidence" value="ECO:0007669"/>
    <property type="project" value="Ensembl"/>
</dbReference>
<dbReference type="GO" id="GO:0050482">
    <property type="term" value="P:arachidonate secretion"/>
    <property type="evidence" value="ECO:0007669"/>
    <property type="project" value="InterPro"/>
</dbReference>
<dbReference type="GO" id="GO:0050830">
    <property type="term" value="P:defense response to Gram-positive bacterium"/>
    <property type="evidence" value="ECO:0007669"/>
    <property type="project" value="Ensembl"/>
</dbReference>
<dbReference type="GO" id="GO:0006633">
    <property type="term" value="P:fatty acid biosynthetic process"/>
    <property type="evidence" value="ECO:0007669"/>
    <property type="project" value="Ensembl"/>
</dbReference>
<dbReference type="GO" id="GO:0002227">
    <property type="term" value="P:innate immune response in mucosa"/>
    <property type="evidence" value="ECO:0007669"/>
    <property type="project" value="Ensembl"/>
</dbReference>
<dbReference type="GO" id="GO:0046470">
    <property type="term" value="P:phosphatidylcholine metabolic process"/>
    <property type="evidence" value="ECO:0007669"/>
    <property type="project" value="Ensembl"/>
</dbReference>
<dbReference type="GO" id="GO:0046471">
    <property type="term" value="P:phosphatidylglycerol metabolic process"/>
    <property type="evidence" value="ECO:0000250"/>
    <property type="project" value="UniProtKB"/>
</dbReference>
<dbReference type="GO" id="GO:0009395">
    <property type="term" value="P:phospholipid catabolic process"/>
    <property type="evidence" value="ECO:0000304"/>
    <property type="project" value="MGI"/>
</dbReference>
<dbReference type="GO" id="GO:0048146">
    <property type="term" value="P:positive regulation of fibroblast proliferation"/>
    <property type="evidence" value="ECO:0007669"/>
    <property type="project" value="Ensembl"/>
</dbReference>
<dbReference type="GO" id="GO:1904635">
    <property type="term" value="P:positive regulation of podocyte apoptotic process"/>
    <property type="evidence" value="ECO:0000250"/>
    <property type="project" value="UniProtKB"/>
</dbReference>
<dbReference type="CDD" id="cd00125">
    <property type="entry name" value="PLA2c"/>
    <property type="match status" value="1"/>
</dbReference>
<dbReference type="FunFam" id="1.20.90.10:FF:000011">
    <property type="entry name" value="Phospholipase A(2)"/>
    <property type="match status" value="1"/>
</dbReference>
<dbReference type="Gene3D" id="1.20.90.10">
    <property type="entry name" value="Phospholipase A2 domain"/>
    <property type="match status" value="1"/>
</dbReference>
<dbReference type="InterPro" id="IPR001211">
    <property type="entry name" value="PLipase_A2"/>
</dbReference>
<dbReference type="InterPro" id="IPR033112">
    <property type="entry name" value="PLipase_A2_Asp_AS"/>
</dbReference>
<dbReference type="InterPro" id="IPR016090">
    <property type="entry name" value="PLipase_A2_dom"/>
</dbReference>
<dbReference type="InterPro" id="IPR036444">
    <property type="entry name" value="PLipase_A2_dom_sf"/>
</dbReference>
<dbReference type="InterPro" id="IPR033113">
    <property type="entry name" value="PLipase_A2_His_AS"/>
</dbReference>
<dbReference type="PANTHER" id="PTHR11716:SF94">
    <property type="entry name" value="PHOSPHOLIPASE A2"/>
    <property type="match status" value="1"/>
</dbReference>
<dbReference type="PANTHER" id="PTHR11716">
    <property type="entry name" value="PHOSPHOLIPASE A2 FAMILY MEMBER"/>
    <property type="match status" value="1"/>
</dbReference>
<dbReference type="Pfam" id="PF00068">
    <property type="entry name" value="Phospholip_A2_1"/>
    <property type="match status" value="1"/>
</dbReference>
<dbReference type="PRINTS" id="PR00389">
    <property type="entry name" value="PHPHLIPASEA2"/>
</dbReference>
<dbReference type="SMART" id="SM00085">
    <property type="entry name" value="PA2c"/>
    <property type="match status" value="1"/>
</dbReference>
<dbReference type="SUPFAM" id="SSF48619">
    <property type="entry name" value="Phospholipase A2, PLA2"/>
    <property type="match status" value="1"/>
</dbReference>
<dbReference type="PROSITE" id="PS00119">
    <property type="entry name" value="PA2_ASP"/>
    <property type="match status" value="1"/>
</dbReference>
<dbReference type="PROSITE" id="PS00118">
    <property type="entry name" value="PA2_HIS"/>
    <property type="match status" value="1"/>
</dbReference>
<keyword id="KW-0068">Autocatalytic cleavage</keyword>
<keyword id="KW-0106">Calcium</keyword>
<keyword id="KW-1015">Disulfide bond</keyword>
<keyword id="KW-0378">Hydrolase</keyword>
<keyword id="KW-0443">Lipid metabolism</keyword>
<keyword id="KW-0479">Metal-binding</keyword>
<keyword id="KW-1208">Phospholipid metabolism</keyword>
<keyword id="KW-1185">Reference proteome</keyword>
<keyword id="KW-0964">Secreted</keyword>
<keyword id="KW-0732">Signal</keyword>
<keyword id="KW-0865">Zymogen</keyword>
<proteinExistence type="evidence at protein level"/>
<sequence>MKLLLLAALLTAGAAAHSISPRAVWQFRNMIKCTIPGSDPLKDYNNYGCYCGLGGWGTPVDDLDRCCQTHDHCYSQAKKLESCKFLIDNPYTNTYSYSCSGSEITCSAKNNKCEDFICNCDREAAICFSKVPYNKEYKNLDTGKFC</sequence>
<reference key="1">
    <citation type="submission" date="1998-09" db="EMBL/GenBank/DDBJ databases">
        <title>Isolation, characterization and chromosomal localization of mouse sPLA2-Ib gene.</title>
        <authorList>
            <person name="Mandal A.K."/>
            <person name="Zhang Z."/>
            <person name="Mukherjee A.B."/>
        </authorList>
    </citation>
    <scope>NUCLEOTIDE SEQUENCE</scope>
    <source>
        <strain>129/SvJ</strain>
    </source>
</reference>
<reference key="2">
    <citation type="journal article" date="1999" name="J. Biol. Chem.">
        <title>Both group IB and group IIA secreted phospholipases A2 are natural ligands of the mouse 180-kDa M-type receptor.</title>
        <authorList>
            <person name="Cupillard L."/>
            <person name="Mulherkar R."/>
            <person name="Gomez N."/>
            <person name="Kadam S."/>
            <person name="Valentin E."/>
            <person name="Lazdunski M."/>
            <person name="Lambeau G."/>
        </authorList>
    </citation>
    <scope>NUCLEOTIDE SEQUENCE [MRNA]</scope>
    <scope>FUNCTION</scope>
    <scope>INTERACTION WITH PLA2R1</scope>
    <scope>TISSUE SPECIFICITY</scope>
</reference>
<reference key="3">
    <citation type="journal article" date="1999" name="J. Biol. Chem.">
        <title>Low molecular weight group IIA and group V phospholipase A(2) enzymes have different intracellular locations in mouse bone marrow-derived mast cells.</title>
        <authorList>
            <person name="Bingham C.O. III"/>
            <person name="Fijneman R.J.A."/>
            <person name="Friend D.S."/>
            <person name="Goddeau R.P."/>
            <person name="Rogers R.A."/>
            <person name="Austen K.F."/>
            <person name="Arm J.P."/>
        </authorList>
    </citation>
    <scope>NUCLEOTIDE SEQUENCE [MRNA]</scope>
    <source>
        <strain>BALB/cJ</strain>
        <tissue>Lung</tissue>
    </source>
</reference>
<reference key="4">
    <citation type="journal article" date="2000" name="Gene">
        <title>Molecular structure and tissue-specific expression of the mouse pancreatic phospholipase A2 gene.</title>
        <authorList>
            <person name="Richmond B.L."/>
            <person name="Hui D.Y."/>
        </authorList>
    </citation>
    <scope>NUCLEOTIDE SEQUENCE [MRNA]</scope>
</reference>
<reference key="5">
    <citation type="submission" date="1998-09" db="EMBL/GenBank/DDBJ databases">
        <title>Role of sPLA2-I in colorectal tumorigenesis.</title>
        <authorList>
            <person name="Mandal A.K."/>
            <person name="Zhang Z."/>
            <person name="Popescu N."/>
            <person name="Mukherjee A.B."/>
        </authorList>
    </citation>
    <scope>NUCLEOTIDE SEQUENCE</scope>
    <source>
        <strain>129/SvJ</strain>
        <tissue>Pancreas</tissue>
    </source>
</reference>
<reference key="6">
    <citation type="journal article" date="2005" name="Science">
        <title>The transcriptional landscape of the mammalian genome.</title>
        <authorList>
            <person name="Carninci P."/>
            <person name="Kasukawa T."/>
            <person name="Katayama S."/>
            <person name="Gough J."/>
            <person name="Frith M.C."/>
            <person name="Maeda N."/>
            <person name="Oyama R."/>
            <person name="Ravasi T."/>
            <person name="Lenhard B."/>
            <person name="Wells C."/>
            <person name="Kodzius R."/>
            <person name="Shimokawa K."/>
            <person name="Bajic V.B."/>
            <person name="Brenner S.E."/>
            <person name="Batalov S."/>
            <person name="Forrest A.R."/>
            <person name="Zavolan M."/>
            <person name="Davis M.J."/>
            <person name="Wilming L.G."/>
            <person name="Aidinis V."/>
            <person name="Allen J.E."/>
            <person name="Ambesi-Impiombato A."/>
            <person name="Apweiler R."/>
            <person name="Aturaliya R.N."/>
            <person name="Bailey T.L."/>
            <person name="Bansal M."/>
            <person name="Baxter L."/>
            <person name="Beisel K.W."/>
            <person name="Bersano T."/>
            <person name="Bono H."/>
            <person name="Chalk A.M."/>
            <person name="Chiu K.P."/>
            <person name="Choudhary V."/>
            <person name="Christoffels A."/>
            <person name="Clutterbuck D.R."/>
            <person name="Crowe M.L."/>
            <person name="Dalla E."/>
            <person name="Dalrymple B.P."/>
            <person name="de Bono B."/>
            <person name="Della Gatta G."/>
            <person name="di Bernardo D."/>
            <person name="Down T."/>
            <person name="Engstrom P."/>
            <person name="Fagiolini M."/>
            <person name="Faulkner G."/>
            <person name="Fletcher C.F."/>
            <person name="Fukushima T."/>
            <person name="Furuno M."/>
            <person name="Futaki S."/>
            <person name="Gariboldi M."/>
            <person name="Georgii-Hemming P."/>
            <person name="Gingeras T.R."/>
            <person name="Gojobori T."/>
            <person name="Green R.E."/>
            <person name="Gustincich S."/>
            <person name="Harbers M."/>
            <person name="Hayashi Y."/>
            <person name="Hensch T.K."/>
            <person name="Hirokawa N."/>
            <person name="Hill D."/>
            <person name="Huminiecki L."/>
            <person name="Iacono M."/>
            <person name="Ikeo K."/>
            <person name="Iwama A."/>
            <person name="Ishikawa T."/>
            <person name="Jakt M."/>
            <person name="Kanapin A."/>
            <person name="Katoh M."/>
            <person name="Kawasawa Y."/>
            <person name="Kelso J."/>
            <person name="Kitamura H."/>
            <person name="Kitano H."/>
            <person name="Kollias G."/>
            <person name="Krishnan S.P."/>
            <person name="Kruger A."/>
            <person name="Kummerfeld S.K."/>
            <person name="Kurochkin I.V."/>
            <person name="Lareau L.F."/>
            <person name="Lazarevic D."/>
            <person name="Lipovich L."/>
            <person name="Liu J."/>
            <person name="Liuni S."/>
            <person name="McWilliam S."/>
            <person name="Madan Babu M."/>
            <person name="Madera M."/>
            <person name="Marchionni L."/>
            <person name="Matsuda H."/>
            <person name="Matsuzawa S."/>
            <person name="Miki H."/>
            <person name="Mignone F."/>
            <person name="Miyake S."/>
            <person name="Morris K."/>
            <person name="Mottagui-Tabar S."/>
            <person name="Mulder N."/>
            <person name="Nakano N."/>
            <person name="Nakauchi H."/>
            <person name="Ng P."/>
            <person name="Nilsson R."/>
            <person name="Nishiguchi S."/>
            <person name="Nishikawa S."/>
            <person name="Nori F."/>
            <person name="Ohara O."/>
            <person name="Okazaki Y."/>
            <person name="Orlando V."/>
            <person name="Pang K.C."/>
            <person name="Pavan W.J."/>
            <person name="Pavesi G."/>
            <person name="Pesole G."/>
            <person name="Petrovsky N."/>
            <person name="Piazza S."/>
            <person name="Reed J."/>
            <person name="Reid J.F."/>
            <person name="Ring B.Z."/>
            <person name="Ringwald M."/>
            <person name="Rost B."/>
            <person name="Ruan Y."/>
            <person name="Salzberg S.L."/>
            <person name="Sandelin A."/>
            <person name="Schneider C."/>
            <person name="Schoenbach C."/>
            <person name="Sekiguchi K."/>
            <person name="Semple C.A."/>
            <person name="Seno S."/>
            <person name="Sessa L."/>
            <person name="Sheng Y."/>
            <person name="Shibata Y."/>
            <person name="Shimada H."/>
            <person name="Shimada K."/>
            <person name="Silva D."/>
            <person name="Sinclair B."/>
            <person name="Sperling S."/>
            <person name="Stupka E."/>
            <person name="Sugiura K."/>
            <person name="Sultana R."/>
            <person name="Takenaka Y."/>
            <person name="Taki K."/>
            <person name="Tammoja K."/>
            <person name="Tan S.L."/>
            <person name="Tang S."/>
            <person name="Taylor M.S."/>
            <person name="Tegner J."/>
            <person name="Teichmann S.A."/>
            <person name="Ueda H.R."/>
            <person name="van Nimwegen E."/>
            <person name="Verardo R."/>
            <person name="Wei C.L."/>
            <person name="Yagi K."/>
            <person name="Yamanishi H."/>
            <person name="Zabarovsky E."/>
            <person name="Zhu S."/>
            <person name="Zimmer A."/>
            <person name="Hide W."/>
            <person name="Bult C."/>
            <person name="Grimmond S.M."/>
            <person name="Teasdale R.D."/>
            <person name="Liu E.T."/>
            <person name="Brusic V."/>
            <person name="Quackenbush J."/>
            <person name="Wahlestedt C."/>
            <person name="Mattick J.S."/>
            <person name="Hume D.A."/>
            <person name="Kai C."/>
            <person name="Sasaki D."/>
            <person name="Tomaru Y."/>
            <person name="Fukuda S."/>
            <person name="Kanamori-Katayama M."/>
            <person name="Suzuki M."/>
            <person name="Aoki J."/>
            <person name="Arakawa T."/>
            <person name="Iida J."/>
            <person name="Imamura K."/>
            <person name="Itoh M."/>
            <person name="Kato T."/>
            <person name="Kawaji H."/>
            <person name="Kawagashira N."/>
            <person name="Kawashima T."/>
            <person name="Kojima M."/>
            <person name="Kondo S."/>
            <person name="Konno H."/>
            <person name="Nakano K."/>
            <person name="Ninomiya N."/>
            <person name="Nishio T."/>
            <person name="Okada M."/>
            <person name="Plessy C."/>
            <person name="Shibata K."/>
            <person name="Shiraki T."/>
            <person name="Suzuki S."/>
            <person name="Tagami M."/>
            <person name="Waki K."/>
            <person name="Watahiki A."/>
            <person name="Okamura-Oho Y."/>
            <person name="Suzuki H."/>
            <person name="Kawai J."/>
            <person name="Hayashizaki Y."/>
        </authorList>
    </citation>
    <scope>NUCLEOTIDE SEQUENCE [LARGE SCALE MRNA]</scope>
    <source>
        <strain>C57BL/6J</strain>
        <tissue>Pancreas</tissue>
        <tissue>Small intestine</tissue>
        <tissue>Stomach</tissue>
        <tissue>Tongue</tissue>
    </source>
</reference>
<reference key="7">
    <citation type="journal article" date="2004" name="Genome Res.">
        <title>The status, quality, and expansion of the NIH full-length cDNA project: the Mammalian Gene Collection (MGC).</title>
        <authorList>
            <consortium name="The MGC Project Team"/>
        </authorList>
    </citation>
    <scope>NUCLEOTIDE SEQUENCE [LARGE SCALE MRNA]</scope>
    <source>
        <tissue>Brain</tissue>
    </source>
</reference>
<reference key="8">
    <citation type="journal article" date="2010" name="Cell">
        <title>A tissue-specific atlas of mouse protein phosphorylation and expression.</title>
        <authorList>
            <person name="Huttlin E.L."/>
            <person name="Jedrychowski M.P."/>
            <person name="Elias J.E."/>
            <person name="Goswami T."/>
            <person name="Rad R."/>
            <person name="Beausoleil S.A."/>
            <person name="Villen J."/>
            <person name="Haas W."/>
            <person name="Sowa M.E."/>
            <person name="Gygi S.P."/>
        </authorList>
    </citation>
    <scope>IDENTIFICATION BY MASS SPECTROMETRY [LARGE SCALE ANALYSIS]</scope>
    <source>
        <tissue>Pancreas</tissue>
    </source>
</reference>
<reference key="9">
    <citation type="journal article" date="2011" name="J. Lipid Res.">
        <title>Group 1B phospholipase A(2) deficiency protects against diet-induced hyperlipidemia in mice.</title>
        <authorList>
            <person name="Hollie N.I."/>
            <person name="Hui D.Y."/>
        </authorList>
    </citation>
    <scope>DISRUPTION PHENOTYPE</scope>
</reference>
<reference key="10">
    <citation type="journal article" date="2017" name="Cell Host Microbe">
        <title>Epithelial-Cell-Derived Phospholipase A2 Group 1B Is an Endogenous Anthelmintic.</title>
        <authorList>
            <person name="Entwistle L.J."/>
            <person name="Pelly V.S."/>
            <person name="Coomes S.M."/>
            <person name="Kannan Y."/>
            <person name="Perez-Lloret J."/>
            <person name="Czieso S."/>
            <person name="Silva Dos Santos M."/>
            <person name="MacRae J.I."/>
            <person name="Collinson L."/>
            <person name="Sesay A."/>
            <person name="Nikolov N."/>
            <person name="Metidji A."/>
            <person name="Helmby H."/>
            <person name="Hui D.Y."/>
            <person name="Wilson M.S."/>
        </authorList>
    </citation>
    <scope>FUNCTION</scope>
    <scope>DISRUPTION PHENOTYPE</scope>
    <scope>TISSUE SPECIFICITY</scope>
    <scope>INDUCTION BY IL4 AND IL13</scope>
</reference>
<gene>
    <name type="primary">Pla2g1b</name>
    <name type="synonym">Pla2</name>
</gene>
<comment type="function">
    <text evidence="4 5 8 10">Secretory calcium-dependent phospholipase A2 that primarily targets dietary phospholipids in the intestinal tract (By similarity). Hydrolyzes the ester bond of the fatty acyl group attached at sn-2 position of phospholipids (phospholipase A2 activity) with preference for phosphatidylethanolamines and phosphatidylglycerols over phosphatidylcholines (By similarity). May play a role in the biosynthesis of N-acyl ethanolamines that regulate energy metabolism and inflammation in the intestinal tract. Hydrolyzes N-acyl phosphatidylethanolamines to N-acyl lysophosphatidylethanolamines, which are further cleaved by a lysophospholipase D to release N-acyl ethanolamines (By similarity). May act in an autocrine and paracrine manner (PubMed:10066760). Upon binding to the PLA2R1 receptor can regulate podocyte survival and glomerular homeostasis (By similarity). Has anti-helminth activity in a process regulated by gut microbiota (PubMed:29024642). Upon helminth infection of intestinal epithelia, directly affects phosphatidylethanolamine contents in the membrane of helminth larvae, likely controlling an array of phospholipid-mediated cellular processes such as membrane fusion and cell division while providing for better immune recognition, ultimately reducing larvae integrity and infectivity (PubMed:29024642).</text>
</comment>
<comment type="catalytic activity">
    <reaction evidence="4 5 6 7">
        <text>a 1,2-diacyl-sn-glycero-3-phosphocholine + H2O = a 1-acyl-sn-glycero-3-phosphocholine + a fatty acid + H(+)</text>
        <dbReference type="Rhea" id="RHEA:15801"/>
        <dbReference type="ChEBI" id="CHEBI:15377"/>
        <dbReference type="ChEBI" id="CHEBI:15378"/>
        <dbReference type="ChEBI" id="CHEBI:28868"/>
        <dbReference type="ChEBI" id="CHEBI:57643"/>
        <dbReference type="ChEBI" id="CHEBI:58168"/>
        <dbReference type="EC" id="3.1.1.4"/>
    </reaction>
    <physiologicalReaction direction="left-to-right" evidence="4 5">
        <dbReference type="Rhea" id="RHEA:15802"/>
    </physiologicalReaction>
</comment>
<comment type="catalytic activity">
    <reaction evidence="4">
        <text>1,2-ditetradecanoyl-sn-glycero-3-phosphocholine + H2O = 1-tetradecanoyl-sn-glycero-3-phosphocholine + tetradecanoate + H(+)</text>
        <dbReference type="Rhea" id="RHEA:54456"/>
        <dbReference type="ChEBI" id="CHEBI:15377"/>
        <dbReference type="ChEBI" id="CHEBI:15378"/>
        <dbReference type="ChEBI" id="CHEBI:30807"/>
        <dbReference type="ChEBI" id="CHEBI:45240"/>
        <dbReference type="ChEBI" id="CHEBI:64489"/>
    </reaction>
</comment>
<comment type="catalytic activity">
    <reaction evidence="5">
        <text>1,2-dihexadecanoyl-sn-glycero-3-phosphocholine + H2O = 1-hexadecanoyl-sn-glycero-3-phosphocholine + hexadecanoate + H(+)</text>
        <dbReference type="Rhea" id="RHEA:41223"/>
        <dbReference type="ChEBI" id="CHEBI:7896"/>
        <dbReference type="ChEBI" id="CHEBI:15377"/>
        <dbReference type="ChEBI" id="CHEBI:15378"/>
        <dbReference type="ChEBI" id="CHEBI:72998"/>
        <dbReference type="ChEBI" id="CHEBI:72999"/>
    </reaction>
    <physiologicalReaction direction="left-to-right" evidence="5">
        <dbReference type="Rhea" id="RHEA:41224"/>
    </physiologicalReaction>
</comment>
<comment type="catalytic activity">
    <reaction evidence="4 5">
        <text>1-hexadecanoyl-2-(9Z-octadecenoyl)-sn-glycero-3-phosphocholine + H2O = 1-hexadecanoyl-sn-glycero-3-phosphocholine + (9Z)-octadecenoate + H(+)</text>
        <dbReference type="Rhea" id="RHEA:38779"/>
        <dbReference type="ChEBI" id="CHEBI:15377"/>
        <dbReference type="ChEBI" id="CHEBI:15378"/>
        <dbReference type="ChEBI" id="CHEBI:30823"/>
        <dbReference type="ChEBI" id="CHEBI:72998"/>
        <dbReference type="ChEBI" id="CHEBI:73001"/>
    </reaction>
    <physiologicalReaction direction="left-to-right" evidence="4 5">
        <dbReference type="Rhea" id="RHEA:38780"/>
    </physiologicalReaction>
</comment>
<comment type="catalytic activity">
    <reaction evidence="5">
        <text>1-hexadecanoyl-2-(5Z,8Z,11Z,14Z-eicosatetraenoyl)-sn-glycero-3-phosphocholine + H2O = 1-hexadecanoyl-sn-glycero-3-phosphocholine + (5Z,8Z,11Z,14Z)-eicosatetraenoate + H(+)</text>
        <dbReference type="Rhea" id="RHEA:40427"/>
        <dbReference type="ChEBI" id="CHEBI:15377"/>
        <dbReference type="ChEBI" id="CHEBI:15378"/>
        <dbReference type="ChEBI" id="CHEBI:32395"/>
        <dbReference type="ChEBI" id="CHEBI:72998"/>
        <dbReference type="ChEBI" id="CHEBI:73003"/>
    </reaction>
    <physiologicalReaction direction="left-to-right" evidence="5">
        <dbReference type="Rhea" id="RHEA:40428"/>
    </physiologicalReaction>
</comment>
<comment type="catalytic activity">
    <reaction evidence="4 5">
        <text>1-hexadecanoyl-2-(9Z-octadecenoyl)-sn-glycero-3-phospho-(1'-sn-glycerol) + H2O = 1-hexadecanoyl-sn-glycero-3-phospho-(1'-sn-glycerol) + (9Z)-octadecenoate + H(+)</text>
        <dbReference type="Rhea" id="RHEA:40919"/>
        <dbReference type="ChEBI" id="CHEBI:15377"/>
        <dbReference type="ChEBI" id="CHEBI:15378"/>
        <dbReference type="ChEBI" id="CHEBI:30823"/>
        <dbReference type="ChEBI" id="CHEBI:72841"/>
        <dbReference type="ChEBI" id="CHEBI:75158"/>
    </reaction>
    <physiologicalReaction direction="left-to-right" evidence="4 5">
        <dbReference type="Rhea" id="RHEA:40920"/>
    </physiologicalReaction>
</comment>
<comment type="catalytic activity">
    <reaction evidence="5">
        <text>N-hexadecanoyl-1,2-di-(9Z-octadecenoyl)-sn-glycero-3-phosphoethanolamine + H2O = N-hexadecanoyl-1-(9Z-octadecenoyl)-sn-glycero-3-phosphoethanolamine + (9Z)-octadecenoate + H(+)</text>
        <dbReference type="Rhea" id="RHEA:45424"/>
        <dbReference type="ChEBI" id="CHEBI:15377"/>
        <dbReference type="ChEBI" id="CHEBI:15378"/>
        <dbReference type="ChEBI" id="CHEBI:30823"/>
        <dbReference type="ChEBI" id="CHEBI:78097"/>
        <dbReference type="ChEBI" id="CHEBI:85217"/>
    </reaction>
    <physiologicalReaction direction="left-to-right" evidence="5">
        <dbReference type="Rhea" id="RHEA:45425"/>
    </physiologicalReaction>
</comment>
<comment type="catalytic activity">
    <reaction evidence="5">
        <text>1-hexadecanoyl-2-(9Z,12Z-octadecadienoyl)-sn-glycero-3-phosphoethanolamine + H2O = 1-hexadecanoyl-sn-glycero-3-phosphoethanolamine + (9Z,12Z)-octadecadienoate + H(+)</text>
        <dbReference type="Rhea" id="RHEA:40815"/>
        <dbReference type="ChEBI" id="CHEBI:15377"/>
        <dbReference type="ChEBI" id="CHEBI:15378"/>
        <dbReference type="ChEBI" id="CHEBI:30245"/>
        <dbReference type="ChEBI" id="CHEBI:73004"/>
        <dbReference type="ChEBI" id="CHEBI:73008"/>
    </reaction>
    <physiologicalReaction direction="left-to-right" evidence="5">
        <dbReference type="Rhea" id="RHEA:40816"/>
    </physiologicalReaction>
</comment>
<comment type="catalytic activity">
    <reaction evidence="5">
        <text>N,1-dihexadecanoyl-2-(9Z,12Z-octadecadienoyl)-sn-glycero-3-phosphoethanolamine + H2O = N,1-dihexadecanoyl-sn-glycero-3-phosphoethanolamine + (9Z,12Z)-octadecadienoate + H(+)</text>
        <dbReference type="Rhea" id="RHEA:56424"/>
        <dbReference type="ChEBI" id="CHEBI:15377"/>
        <dbReference type="ChEBI" id="CHEBI:15378"/>
        <dbReference type="ChEBI" id="CHEBI:30245"/>
        <dbReference type="ChEBI" id="CHEBI:85334"/>
        <dbReference type="ChEBI" id="CHEBI:85335"/>
    </reaction>
    <physiologicalReaction direction="left-to-right" evidence="5">
        <dbReference type="Rhea" id="RHEA:56425"/>
    </physiologicalReaction>
</comment>
<comment type="cofactor">
    <cofactor evidence="3">
        <name>Ca(2+)</name>
        <dbReference type="ChEBI" id="CHEBI:29108"/>
    </cofactor>
    <text evidence="3">Binds 1 Ca(2+) ion per subunit.</text>
</comment>
<comment type="subunit">
    <text evidence="2 8">Monomer or homodimer (By similarity). Interacts with PLA2R1; this interaction mediates intracellular signaling as well as clearance of extracellular PLA2G1B via endocytotic pathway (PubMed:10066760).</text>
</comment>
<comment type="subcellular location">
    <subcellularLocation>
        <location evidence="4">Secreted</location>
    </subcellularLocation>
    <text evidence="4">Secreted from pancreatic acinar cells in its inactive form.</text>
</comment>
<comment type="tissue specificity">
    <text evidence="8 10">Expressed in pancreas, liver, lung and spleen (PubMed:10066760). Expressed in EPCAM-positive intestinal epithelial cell (at protein level) (PubMed:29024642).</text>
</comment>
<comment type="induction">
    <text evidence="10">Up-regulated in EPCAM-positive intestinal epithelial cell upon helminth infection (PubMed:29024642). Up-regulated in intestinal epithelial organoids in response to stimulation with T-helper type 2 cytokines IL4 and IL13 (PubMed:29024642).</text>
</comment>
<comment type="PTM">
    <text evidence="4">Activated by trypsin cleavage in the duodenum. Can also be activated by thrombin or autocatalytically.</text>
</comment>
<comment type="disruption phenotype">
    <text evidence="9 10">Mutant mice are susceptible to H.polygyrus and N.brasiliensis infection, failing to expel larvae and retaining a sustained infection (PubMed:29024642). In response to high fat diet, mutant mice are resistant to hyperlipidemia associated with reduced hepatic very low density lipoprotein production and increased triglyceride-rich lipoprotein clearance (PubMed:21908646).</text>
</comment>
<comment type="similarity">
    <text evidence="11">Belongs to the phospholipase A2 family.</text>
</comment>
<feature type="signal peptide" evidence="1">
    <location>
        <begin position="1"/>
        <end position="15"/>
    </location>
</feature>
<feature type="propeptide" id="PRO_0000022741" description="Activation peptide" evidence="1">
    <location>
        <begin position="16"/>
        <end position="22"/>
    </location>
</feature>
<feature type="chain" id="PRO_0000022742" description="Phospholipase A2">
    <location>
        <begin position="23"/>
        <end position="146"/>
    </location>
</feature>
<feature type="active site" evidence="3">
    <location>
        <position position="70"/>
    </location>
</feature>
<feature type="active site" evidence="3">
    <location>
        <position position="121"/>
    </location>
</feature>
<feature type="binding site" evidence="3">
    <location>
        <position position="50"/>
    </location>
    <ligand>
        <name>Ca(2+)</name>
        <dbReference type="ChEBI" id="CHEBI:29108"/>
    </ligand>
</feature>
<feature type="binding site" evidence="3">
    <location>
        <position position="52"/>
    </location>
    <ligand>
        <name>Ca(2+)</name>
        <dbReference type="ChEBI" id="CHEBI:29108"/>
    </ligand>
</feature>
<feature type="binding site" evidence="3">
    <location>
        <position position="54"/>
    </location>
    <ligand>
        <name>Ca(2+)</name>
        <dbReference type="ChEBI" id="CHEBI:29108"/>
    </ligand>
</feature>
<feature type="binding site" evidence="3">
    <location>
        <position position="71"/>
    </location>
    <ligand>
        <name>Ca(2+)</name>
        <dbReference type="ChEBI" id="CHEBI:29108"/>
    </ligand>
</feature>
<feature type="disulfide bond" evidence="3">
    <location>
        <begin position="33"/>
        <end position="99"/>
    </location>
</feature>
<feature type="disulfide bond" evidence="3">
    <location>
        <begin position="49"/>
        <end position="146"/>
    </location>
</feature>
<feature type="disulfide bond" evidence="3">
    <location>
        <begin position="51"/>
        <end position="67"/>
    </location>
</feature>
<feature type="disulfide bond" evidence="3">
    <location>
        <begin position="66"/>
        <end position="127"/>
    </location>
</feature>
<feature type="disulfide bond" evidence="3">
    <location>
        <begin position="73"/>
        <end position="120"/>
    </location>
</feature>
<feature type="disulfide bond" evidence="3">
    <location>
        <begin position="83"/>
        <end position="113"/>
    </location>
</feature>
<feature type="disulfide bond" evidence="3">
    <location>
        <begin position="106"/>
        <end position="118"/>
    </location>
</feature>
<feature type="sequence conflict" description="In Ref. 6; BAB26212." evidence="11" ref="6">
    <original>G</original>
    <variation>S</variation>
    <location>
        <position position="52"/>
    </location>
</feature>
<feature type="sequence conflict" description="In Ref. 6; BAB26212." evidence="11" ref="6">
    <original>T</original>
    <variation>P</variation>
    <location>
        <position position="58"/>
    </location>
</feature>
<feature type="sequence conflict" description="In Ref. 6; BAB26212." evidence="11" ref="6">
    <original>KK</original>
    <variation>EN</variation>
    <location>
        <begin position="78"/>
        <end position="79"/>
    </location>
</feature>
<feature type="sequence conflict" description="In Ref. 6; BAB26212." evidence="11" ref="6">
    <original>I</original>
    <variation>R</variation>
    <location>
        <position position="87"/>
    </location>
</feature>
<feature type="sequence conflict" description="In Ref. 6; BAB26212." evidence="11" ref="6">
    <original>Y</original>
    <variation>F</variation>
    <location>
        <position position="95"/>
    </location>
</feature>
<feature type="sequence conflict" description="In Ref. 6; BAB26212." evidence="11" ref="6">
    <original>S</original>
    <variation>G</variation>
    <location>
        <position position="102"/>
    </location>
</feature>
<feature type="sequence conflict" description="In Ref. 6; BAB25608." evidence="11" ref="6">
    <original>R</original>
    <variation>S</variation>
    <location>
        <position position="122"/>
    </location>
</feature>
<evidence type="ECO:0000250" key="1"/>
<evidence type="ECO:0000250" key="2">
    <source>
        <dbReference type="UniProtKB" id="P00592"/>
    </source>
</evidence>
<evidence type="ECO:0000250" key="3">
    <source>
        <dbReference type="UniProtKB" id="P00593"/>
    </source>
</evidence>
<evidence type="ECO:0000250" key="4">
    <source>
        <dbReference type="UniProtKB" id="P04054"/>
    </source>
</evidence>
<evidence type="ECO:0000250" key="5">
    <source>
        <dbReference type="UniProtKB" id="P04055"/>
    </source>
</evidence>
<evidence type="ECO:0000255" key="6">
    <source>
        <dbReference type="PROSITE-ProRule" id="PRU10035"/>
    </source>
</evidence>
<evidence type="ECO:0000255" key="7">
    <source>
        <dbReference type="PROSITE-ProRule" id="PRU10036"/>
    </source>
</evidence>
<evidence type="ECO:0000269" key="8">
    <source>
    </source>
</evidence>
<evidence type="ECO:0000269" key="9">
    <source>
    </source>
</evidence>
<evidence type="ECO:0000269" key="10">
    <source>
    </source>
</evidence>
<evidence type="ECO:0000305" key="11"/>